<proteinExistence type="inferred from homology"/>
<reference key="1">
    <citation type="journal article" date="2005" name="J. Bacteriol.">
        <title>Swine and poultry pathogens: the complete genome sequences of two strains of Mycoplasma hyopneumoniae and a strain of Mycoplasma synoviae.</title>
        <authorList>
            <person name="Vasconcelos A.T.R."/>
            <person name="Ferreira H.B."/>
            <person name="Bizarro C.V."/>
            <person name="Bonatto S.L."/>
            <person name="Carvalho M.O."/>
            <person name="Pinto P.M."/>
            <person name="Almeida D.F."/>
            <person name="Almeida L.G.P."/>
            <person name="Almeida R."/>
            <person name="Alves-Junior L."/>
            <person name="Assuncao E.N."/>
            <person name="Azevedo V.A.C."/>
            <person name="Bogo M.R."/>
            <person name="Brigido M.M."/>
            <person name="Brocchi M."/>
            <person name="Burity H.A."/>
            <person name="Camargo A.A."/>
            <person name="Camargo S.S."/>
            <person name="Carepo M.S."/>
            <person name="Carraro D.M."/>
            <person name="de Mattos Cascardo J.C."/>
            <person name="Castro L.A."/>
            <person name="Cavalcanti G."/>
            <person name="Chemale G."/>
            <person name="Collevatti R.G."/>
            <person name="Cunha C.W."/>
            <person name="Dallagiovanna B."/>
            <person name="Dambros B.P."/>
            <person name="Dellagostin O.A."/>
            <person name="Falcao C."/>
            <person name="Fantinatti-Garboggini F."/>
            <person name="Felipe M.S.S."/>
            <person name="Fiorentin L."/>
            <person name="Franco G.R."/>
            <person name="Freitas N.S.A."/>
            <person name="Frias D."/>
            <person name="Grangeiro T.B."/>
            <person name="Grisard E.C."/>
            <person name="Guimaraes C.T."/>
            <person name="Hungria M."/>
            <person name="Jardim S.N."/>
            <person name="Krieger M.A."/>
            <person name="Laurino J.P."/>
            <person name="Lima L.F.A."/>
            <person name="Lopes M.I."/>
            <person name="Loreto E.L.S."/>
            <person name="Madeira H.M.F."/>
            <person name="Manfio G.P."/>
            <person name="Maranhao A.Q."/>
            <person name="Martinkovics C.T."/>
            <person name="Medeiros S.R.B."/>
            <person name="Moreira M.A.M."/>
            <person name="Neiva M."/>
            <person name="Ramalho-Neto C.E."/>
            <person name="Nicolas M.F."/>
            <person name="Oliveira S.C."/>
            <person name="Paixao R.F.C."/>
            <person name="Pedrosa F.O."/>
            <person name="Pena S.D.J."/>
            <person name="Pereira M."/>
            <person name="Pereira-Ferrari L."/>
            <person name="Piffer I."/>
            <person name="Pinto L.S."/>
            <person name="Potrich D.P."/>
            <person name="Salim A.C.M."/>
            <person name="Santos F.R."/>
            <person name="Schmitt R."/>
            <person name="Schneider M.P.C."/>
            <person name="Schrank A."/>
            <person name="Schrank I.S."/>
            <person name="Schuck A.F."/>
            <person name="Seuanez H.N."/>
            <person name="Silva D.W."/>
            <person name="Silva R."/>
            <person name="Silva S.C."/>
            <person name="Soares C.M.A."/>
            <person name="Souza K.R.L."/>
            <person name="Souza R.C."/>
            <person name="Staats C.C."/>
            <person name="Steffens M.B.R."/>
            <person name="Teixeira S.M.R."/>
            <person name="Urmenyi T.P."/>
            <person name="Vainstein M.H."/>
            <person name="Zuccherato L.W."/>
            <person name="Simpson A.J.G."/>
            <person name="Zaha A."/>
        </authorList>
    </citation>
    <scope>NUCLEOTIDE SEQUENCE [LARGE SCALE GENOMIC DNA]</scope>
    <source>
        <strain>J / ATCC 25934 / NCTC 10110</strain>
    </source>
</reference>
<feature type="chain" id="PRO_1000072523" description="Small ribosomal subunit protein uS9">
    <location>
        <begin position="1"/>
        <end position="132"/>
    </location>
</feature>
<protein>
    <recommendedName>
        <fullName evidence="1">Small ribosomal subunit protein uS9</fullName>
    </recommendedName>
    <alternativeName>
        <fullName evidence="2">30S ribosomal protein S9</fullName>
    </alternativeName>
</protein>
<accession>Q4A938</accession>
<organism>
    <name type="scientific">Mesomycoplasma hyopneumoniae (strain J / ATCC 25934 / NCTC 10110)</name>
    <name type="common">Mycoplasma hyopneumoniae</name>
    <dbReference type="NCBI Taxonomy" id="262719"/>
    <lineage>
        <taxon>Bacteria</taxon>
        <taxon>Bacillati</taxon>
        <taxon>Mycoplasmatota</taxon>
        <taxon>Mycoplasmoidales</taxon>
        <taxon>Metamycoplasmataceae</taxon>
        <taxon>Mesomycoplasma</taxon>
    </lineage>
</organism>
<name>RS9_MESHJ</name>
<comment type="similarity">
    <text evidence="1">Belongs to the universal ribosomal protein uS9 family.</text>
</comment>
<dbReference type="EMBL" id="AE017243">
    <property type="protein sequence ID" value="AAZ44733.1"/>
    <property type="molecule type" value="Genomic_DNA"/>
</dbReference>
<dbReference type="RefSeq" id="WP_011206502.1">
    <property type="nucleotide sequence ID" value="NC_007295.1"/>
</dbReference>
<dbReference type="SMR" id="Q4A938"/>
<dbReference type="GeneID" id="41334953"/>
<dbReference type="KEGG" id="mhj:MHJ_0650"/>
<dbReference type="eggNOG" id="COG0103">
    <property type="taxonomic scope" value="Bacteria"/>
</dbReference>
<dbReference type="HOGENOM" id="CLU_046483_2_1_14"/>
<dbReference type="OrthoDB" id="9803965at2"/>
<dbReference type="Proteomes" id="UP000000548">
    <property type="component" value="Chromosome"/>
</dbReference>
<dbReference type="GO" id="GO:0022627">
    <property type="term" value="C:cytosolic small ribosomal subunit"/>
    <property type="evidence" value="ECO:0007669"/>
    <property type="project" value="TreeGrafter"/>
</dbReference>
<dbReference type="GO" id="GO:0003723">
    <property type="term" value="F:RNA binding"/>
    <property type="evidence" value="ECO:0007669"/>
    <property type="project" value="TreeGrafter"/>
</dbReference>
<dbReference type="GO" id="GO:0003735">
    <property type="term" value="F:structural constituent of ribosome"/>
    <property type="evidence" value="ECO:0007669"/>
    <property type="project" value="InterPro"/>
</dbReference>
<dbReference type="GO" id="GO:0006412">
    <property type="term" value="P:translation"/>
    <property type="evidence" value="ECO:0007669"/>
    <property type="project" value="UniProtKB-UniRule"/>
</dbReference>
<dbReference type="FunFam" id="3.30.230.10:FF:000001">
    <property type="entry name" value="30S ribosomal protein S9"/>
    <property type="match status" value="1"/>
</dbReference>
<dbReference type="Gene3D" id="3.30.230.10">
    <property type="match status" value="1"/>
</dbReference>
<dbReference type="HAMAP" id="MF_00532_B">
    <property type="entry name" value="Ribosomal_uS9_B"/>
    <property type="match status" value="1"/>
</dbReference>
<dbReference type="InterPro" id="IPR020568">
    <property type="entry name" value="Ribosomal_Su5_D2-typ_SF"/>
</dbReference>
<dbReference type="InterPro" id="IPR000754">
    <property type="entry name" value="Ribosomal_uS9"/>
</dbReference>
<dbReference type="InterPro" id="IPR023035">
    <property type="entry name" value="Ribosomal_uS9_bac/plastid"/>
</dbReference>
<dbReference type="InterPro" id="IPR020574">
    <property type="entry name" value="Ribosomal_uS9_CS"/>
</dbReference>
<dbReference type="InterPro" id="IPR014721">
    <property type="entry name" value="Ribsml_uS5_D2-typ_fold_subgr"/>
</dbReference>
<dbReference type="NCBIfam" id="NF001099">
    <property type="entry name" value="PRK00132.1"/>
    <property type="match status" value="1"/>
</dbReference>
<dbReference type="PANTHER" id="PTHR21569">
    <property type="entry name" value="RIBOSOMAL PROTEIN S9"/>
    <property type="match status" value="1"/>
</dbReference>
<dbReference type="PANTHER" id="PTHR21569:SF1">
    <property type="entry name" value="SMALL RIBOSOMAL SUBUNIT PROTEIN US9M"/>
    <property type="match status" value="1"/>
</dbReference>
<dbReference type="Pfam" id="PF00380">
    <property type="entry name" value="Ribosomal_S9"/>
    <property type="match status" value="1"/>
</dbReference>
<dbReference type="SUPFAM" id="SSF54211">
    <property type="entry name" value="Ribosomal protein S5 domain 2-like"/>
    <property type="match status" value="1"/>
</dbReference>
<dbReference type="PROSITE" id="PS00360">
    <property type="entry name" value="RIBOSOMAL_S9"/>
    <property type="match status" value="1"/>
</dbReference>
<sequence length="132" mass="14652">MNQPELSYYGTGRRKSSVARVTLKHGNGQFKINNRVAKEYLKSDILIKDALQPLSITNTVSEFNIRVNAHGGGISGQAGAIRLGIARALLKVSADYRPGLKVAGMLTRDARAKERKKFGLRKARRARQFSKR</sequence>
<keyword id="KW-0687">Ribonucleoprotein</keyword>
<keyword id="KW-0689">Ribosomal protein</keyword>
<gene>
    <name evidence="1" type="primary">rpsI</name>
    <name type="ordered locus">MHJ_0650</name>
</gene>
<evidence type="ECO:0000255" key="1">
    <source>
        <dbReference type="HAMAP-Rule" id="MF_00532"/>
    </source>
</evidence>
<evidence type="ECO:0000305" key="2"/>